<reference key="1">
    <citation type="journal article" date="2005" name="Nature">
        <title>The map-based sequence of the rice genome.</title>
        <authorList>
            <consortium name="International rice genome sequencing project (IRGSP)"/>
        </authorList>
    </citation>
    <scope>NUCLEOTIDE SEQUENCE [LARGE SCALE GENOMIC DNA]</scope>
    <source>
        <strain>cv. Nipponbare</strain>
    </source>
</reference>
<reference key="2">
    <citation type="journal article" date="2008" name="Nucleic Acids Res.">
        <title>The rice annotation project database (RAP-DB): 2008 update.</title>
        <authorList>
            <consortium name="The rice annotation project (RAP)"/>
        </authorList>
    </citation>
    <scope>GENOME REANNOTATION</scope>
    <source>
        <strain>cv. Nipponbare</strain>
    </source>
</reference>
<reference key="3">
    <citation type="journal article" date="2013" name="Rice">
        <title>Improvement of the Oryza sativa Nipponbare reference genome using next generation sequence and optical map data.</title>
        <authorList>
            <person name="Kawahara Y."/>
            <person name="de la Bastide M."/>
            <person name="Hamilton J.P."/>
            <person name="Kanamori H."/>
            <person name="McCombie W.R."/>
            <person name="Ouyang S."/>
            <person name="Schwartz D.C."/>
            <person name="Tanaka T."/>
            <person name="Wu J."/>
            <person name="Zhou S."/>
            <person name="Childs K.L."/>
            <person name="Davidson R.M."/>
            <person name="Lin H."/>
            <person name="Quesada-Ocampo L."/>
            <person name="Vaillancourt B."/>
            <person name="Sakai H."/>
            <person name="Lee S.S."/>
            <person name="Kim J."/>
            <person name="Numa H."/>
            <person name="Itoh T."/>
            <person name="Buell C.R."/>
            <person name="Matsumoto T."/>
        </authorList>
    </citation>
    <scope>GENOME REANNOTATION</scope>
    <source>
        <strain>cv. Nipponbare</strain>
    </source>
</reference>
<reference key="4">
    <citation type="journal article" date="2003" name="Science">
        <title>Collection, mapping, and annotation of over 28,000 cDNA clones from japonica rice.</title>
        <authorList>
            <consortium name="The rice full-length cDNA consortium"/>
        </authorList>
    </citation>
    <scope>NUCLEOTIDE SEQUENCE [LARGE SCALE MRNA]</scope>
    <source>
        <strain>cv. Nipponbare</strain>
    </source>
</reference>
<reference key="5">
    <citation type="journal article" date="2004" name="J. Biosci.">
        <title>Heat stress response in plants: a complex game with chaperones and more than twenty heat stress transcription factors.</title>
        <authorList>
            <person name="Baniwal S.K."/>
            <person name="Bharti K."/>
            <person name="Chan K.Y."/>
            <person name="Fauth M."/>
            <person name="Ganguli A."/>
            <person name="Kotak S."/>
            <person name="Mishra S.K."/>
            <person name="Nover L."/>
            <person name="Port M."/>
            <person name="Scharf K.-D."/>
            <person name="Tripp J."/>
            <person name="Weber C."/>
            <person name="Zielinski D."/>
            <person name="von Koskull-Doering P."/>
        </authorList>
    </citation>
    <scope>GENE FAMILY</scope>
    <scope>NOMENCLATURE</scope>
</reference>
<reference key="6">
    <citation type="journal article" date="2008" name="J. Genet. Genomics">
        <title>Genome-wide analysis of heat shock transcription factor families in rice and Arabidopsis.</title>
        <authorList>
            <person name="Guo J."/>
            <person name="Wu J."/>
            <person name="Ji Q."/>
            <person name="Wang C."/>
            <person name="Luo L."/>
            <person name="Yuan Y."/>
            <person name="Wang Y."/>
            <person name="Wang J."/>
        </authorList>
    </citation>
    <scope>GENE FAMILY</scope>
    <scope>NOMENCLATURE</scope>
</reference>
<organism>
    <name type="scientific">Oryza sativa subsp. japonica</name>
    <name type="common">Rice</name>
    <dbReference type="NCBI Taxonomy" id="39947"/>
    <lineage>
        <taxon>Eukaryota</taxon>
        <taxon>Viridiplantae</taxon>
        <taxon>Streptophyta</taxon>
        <taxon>Embryophyta</taxon>
        <taxon>Tracheophyta</taxon>
        <taxon>Spermatophyta</taxon>
        <taxon>Magnoliopsida</taxon>
        <taxon>Liliopsida</taxon>
        <taxon>Poales</taxon>
        <taxon>Poaceae</taxon>
        <taxon>BOP clade</taxon>
        <taxon>Oryzoideae</taxon>
        <taxon>Oryzeae</taxon>
        <taxon>Oryzinae</taxon>
        <taxon>Oryza</taxon>
        <taxon>Oryza sativa</taxon>
    </lineage>
</organism>
<keyword id="KW-0175">Coiled coil</keyword>
<keyword id="KW-0963">Cytoplasm</keyword>
<keyword id="KW-0238">DNA-binding</keyword>
<keyword id="KW-0539">Nucleus</keyword>
<keyword id="KW-0597">Phosphoprotein</keyword>
<keyword id="KW-1185">Reference proteome</keyword>
<keyword id="KW-0346">Stress response</keyword>
<keyword id="KW-0804">Transcription</keyword>
<keyword id="KW-0805">Transcription regulation</keyword>
<comment type="function">
    <text evidence="1">Transcriptional regulator that specifically binds DNA of heat shock promoter elements (HSE).</text>
</comment>
<comment type="subunit">
    <text evidence="1">Homotrimer.</text>
</comment>
<comment type="subcellular location">
    <subcellularLocation>
        <location evidence="4">Cytoplasm</location>
    </subcellularLocation>
    <subcellularLocation>
        <location evidence="4">Nucleus</location>
    </subcellularLocation>
</comment>
<comment type="domain">
    <text>The hydrophobic-rich region (HR-A/B) corresponds to the oligomerization domain.</text>
</comment>
<comment type="PTM">
    <text evidence="1">Exhibits temperature-dependent phosphorylation.</text>
</comment>
<comment type="similarity">
    <text evidence="4">Belongs to the HSF family. Class A subfamily.</text>
</comment>
<name>HSFA3_ORYSJ</name>
<feature type="chain" id="PRO_0000350826" description="Heat stress transcription factor A-3">
    <location>
        <begin position="1"/>
        <end position="498"/>
    </location>
</feature>
<feature type="region of interest" description="Disordered" evidence="3">
    <location>
        <begin position="156"/>
        <end position="180"/>
    </location>
</feature>
<feature type="region of interest" description="Hydrophobic repeat HR-A/B">
    <location>
        <begin position="184"/>
        <end position="234"/>
    </location>
</feature>
<feature type="region of interest" description="Disordered" evidence="3">
    <location>
        <begin position="263"/>
        <end position="291"/>
    </location>
</feature>
<feature type="region of interest" description="Disordered" evidence="3">
    <location>
        <begin position="356"/>
        <end position="382"/>
    </location>
</feature>
<feature type="coiled-coil region" evidence="2">
    <location>
        <begin position="180"/>
        <end position="235"/>
    </location>
</feature>
<feature type="short sequence motif" description="Nuclear localization signal" evidence="2">
    <location>
        <begin position="258"/>
        <end position="263"/>
    </location>
</feature>
<feature type="short sequence motif" description="Nuclear export signal" evidence="2">
    <location>
        <begin position="309"/>
        <end position="316"/>
    </location>
</feature>
<feature type="compositionally biased region" description="Polar residues" evidence="3">
    <location>
        <begin position="160"/>
        <end position="174"/>
    </location>
</feature>
<feature type="compositionally biased region" description="Polar residues" evidence="3">
    <location>
        <begin position="272"/>
        <end position="291"/>
    </location>
</feature>
<proteinExistence type="evidence at transcript level"/>
<accession>Q6H6Q7</accession>
<accession>B7ESF3</accession>
<dbReference type="EMBL" id="AP004777">
    <property type="protein sequence ID" value="BAD25410.1"/>
    <property type="molecule type" value="Genomic_DNA"/>
</dbReference>
<dbReference type="EMBL" id="AP004879">
    <property type="protein sequence ID" value="BAD25592.1"/>
    <property type="molecule type" value="Genomic_DNA"/>
</dbReference>
<dbReference type="EMBL" id="AP008208">
    <property type="protein sequence ID" value="BAF08917.1"/>
    <property type="molecule type" value="Genomic_DNA"/>
</dbReference>
<dbReference type="EMBL" id="AP014958">
    <property type="protein sequence ID" value="BAS78998.1"/>
    <property type="molecule type" value="Genomic_DNA"/>
</dbReference>
<dbReference type="EMBL" id="AK101934">
    <property type="protein sequence ID" value="BAG95300.1"/>
    <property type="molecule type" value="mRNA"/>
</dbReference>
<dbReference type="RefSeq" id="XP_015623061.1">
    <property type="nucleotide sequence ID" value="XM_015767575.1"/>
</dbReference>
<dbReference type="SMR" id="Q6H6Q7"/>
<dbReference type="FunCoup" id="Q6H6Q7">
    <property type="interactions" value="21"/>
</dbReference>
<dbReference type="STRING" id="39947.Q6H6Q7"/>
<dbReference type="PaxDb" id="39947-Q6H6Q7"/>
<dbReference type="EnsemblPlants" id="Os02t0527300-01">
    <property type="protein sequence ID" value="Os02t0527300-01"/>
    <property type="gene ID" value="Os02g0527300"/>
</dbReference>
<dbReference type="Gramene" id="Os02t0527300-01">
    <property type="protein sequence ID" value="Os02t0527300-01"/>
    <property type="gene ID" value="Os02g0527300"/>
</dbReference>
<dbReference type="KEGG" id="dosa:Os02g0527300"/>
<dbReference type="eggNOG" id="KOG0627">
    <property type="taxonomic scope" value="Eukaryota"/>
</dbReference>
<dbReference type="HOGENOM" id="CLU_030308_9_0_1"/>
<dbReference type="InParanoid" id="Q6H6Q7"/>
<dbReference type="OMA" id="HMSTLNQ"/>
<dbReference type="OrthoDB" id="60033at2759"/>
<dbReference type="Proteomes" id="UP000000763">
    <property type="component" value="Chromosome 2"/>
</dbReference>
<dbReference type="Proteomes" id="UP000059680">
    <property type="component" value="Chromosome 2"/>
</dbReference>
<dbReference type="GO" id="GO:0005737">
    <property type="term" value="C:cytoplasm"/>
    <property type="evidence" value="ECO:0007669"/>
    <property type="project" value="UniProtKB-SubCell"/>
</dbReference>
<dbReference type="GO" id="GO:0005634">
    <property type="term" value="C:nucleus"/>
    <property type="evidence" value="ECO:0000318"/>
    <property type="project" value="GO_Central"/>
</dbReference>
<dbReference type="GO" id="GO:0003700">
    <property type="term" value="F:DNA-binding transcription factor activity"/>
    <property type="evidence" value="ECO:0000318"/>
    <property type="project" value="GO_Central"/>
</dbReference>
<dbReference type="GO" id="GO:0043565">
    <property type="term" value="F:sequence-specific DNA binding"/>
    <property type="evidence" value="ECO:0007669"/>
    <property type="project" value="InterPro"/>
</dbReference>
<dbReference type="GO" id="GO:0034605">
    <property type="term" value="P:cellular response to heat"/>
    <property type="evidence" value="ECO:0000318"/>
    <property type="project" value="GO_Central"/>
</dbReference>
<dbReference type="GO" id="GO:0006357">
    <property type="term" value="P:regulation of transcription by RNA polymerase II"/>
    <property type="evidence" value="ECO:0000318"/>
    <property type="project" value="GO_Central"/>
</dbReference>
<dbReference type="FunFam" id="1.10.10.10:FF:000037">
    <property type="entry name" value="Heat stress transcription factor B-4"/>
    <property type="match status" value="1"/>
</dbReference>
<dbReference type="Gene3D" id="1.10.10.10">
    <property type="entry name" value="Winged helix-like DNA-binding domain superfamily/Winged helix DNA-binding domain"/>
    <property type="match status" value="1"/>
</dbReference>
<dbReference type="InterPro" id="IPR000232">
    <property type="entry name" value="HSF_DNA-bd"/>
</dbReference>
<dbReference type="InterPro" id="IPR036388">
    <property type="entry name" value="WH-like_DNA-bd_sf"/>
</dbReference>
<dbReference type="InterPro" id="IPR036390">
    <property type="entry name" value="WH_DNA-bd_sf"/>
</dbReference>
<dbReference type="PANTHER" id="PTHR10015">
    <property type="entry name" value="HEAT SHOCK TRANSCRIPTION FACTOR"/>
    <property type="match status" value="1"/>
</dbReference>
<dbReference type="PANTHER" id="PTHR10015:SF337">
    <property type="entry name" value="HEAT STRESS TRANSCRIPTION FACTOR A-3"/>
    <property type="match status" value="1"/>
</dbReference>
<dbReference type="Pfam" id="PF00447">
    <property type="entry name" value="HSF_DNA-bind"/>
    <property type="match status" value="1"/>
</dbReference>
<dbReference type="PRINTS" id="PR00056">
    <property type="entry name" value="HSFDOMAIN"/>
</dbReference>
<dbReference type="SMART" id="SM00415">
    <property type="entry name" value="HSF"/>
    <property type="match status" value="1"/>
</dbReference>
<dbReference type="SUPFAM" id="SSF46785">
    <property type="entry name" value="Winged helix' DNA-binding domain"/>
    <property type="match status" value="1"/>
</dbReference>
<dbReference type="PROSITE" id="PS00434">
    <property type="entry name" value="HSF_DOMAIN"/>
    <property type="match status" value="1"/>
</dbReference>
<sequence>MDHNTDPPPTTMVDAAAALLLEPKLEGYDDDGGGEPLQPAPFVSPLDQLMQPPRPLEALLQGPQLPPFLSKTYDLVCEPELDGVISWGHAGNSFVVWDPSAFARDVLPHHFKHNNFSSFVRQLNTYGFRKVHADRWEFAHEDFLRHSKHLLKKIVRRRSSPTQQSGLQPGSSGESGLDPELNTLRREKSALLQEVTRLKQEHLQTIEQMSTLNQRLESAEDRQKQMVSFLAKLLQNPTFLRQLKMHRQQKEIDSTRVKRKFLKHVPHGNIDSGESSSQHTGESNLDFSPTSLDLPATHSDILDLQNFLLEDGDLNLAMLPENIGLDGIEAPDDIGALVQGFDTQEELELGSGVELLEIPPASGPRGQDPTIGRSKGKNVLSPGLDATSSEADCLGSFSDNMGMLSDSMLQTAGKLMDADDDERIWGVDASSALQSSCSGTSQQAYGSLVSDPYLMEMANKPEKFWELDFQALDDGDLQLDKCVIDDPALQQQRGNMNS</sequence>
<protein>
    <recommendedName>
        <fullName>Heat stress transcription factor A-3</fullName>
    </recommendedName>
    <alternativeName>
        <fullName>Heat stress transcription factor 7</fullName>
        <shortName>OsHsf-07</shortName>
    </alternativeName>
</protein>
<gene>
    <name type="primary">HSFA3</name>
    <name type="synonym">HSF07</name>
    <name type="ordered locus">Os02g0527300</name>
    <name type="ordered locus">LOC_Os02g32590</name>
    <name type="ORF">P0458B05.23</name>
    <name type="ORF">P0475F05.3</name>
</gene>
<evidence type="ECO:0000250" key="1"/>
<evidence type="ECO:0000255" key="2"/>
<evidence type="ECO:0000256" key="3">
    <source>
        <dbReference type="SAM" id="MobiDB-lite"/>
    </source>
</evidence>
<evidence type="ECO:0000305" key="4"/>